<accession>Q0HGT6</accession>
<evidence type="ECO:0000255" key="1">
    <source>
        <dbReference type="HAMAP-Rule" id="MF_01104"/>
    </source>
</evidence>
<comment type="function">
    <text evidence="1">Interacts with the SecY protein in vivo. May bind preferentially to an uncomplexed state of SecY, thus functioning either as a chelating agent for excess SecY in the cell or as a regulatory factor that negatively controls the translocase function.</text>
</comment>
<comment type="subcellular location">
    <subcellularLocation>
        <location evidence="1">Cell inner membrane</location>
        <topology evidence="1">Peripheral membrane protein</topology>
        <orientation evidence="1">Cytoplasmic side</orientation>
    </subcellularLocation>
    <text evidence="1">Loosely associated with the cytoplasmic side of the inner membrane, probably via SecY.</text>
</comment>
<comment type="similarity">
    <text evidence="1">Belongs to the Syd family.</text>
</comment>
<organism>
    <name type="scientific">Shewanella sp. (strain MR-4)</name>
    <dbReference type="NCBI Taxonomy" id="60480"/>
    <lineage>
        <taxon>Bacteria</taxon>
        <taxon>Pseudomonadati</taxon>
        <taxon>Pseudomonadota</taxon>
        <taxon>Gammaproteobacteria</taxon>
        <taxon>Alteromonadales</taxon>
        <taxon>Shewanellaceae</taxon>
        <taxon>Shewanella</taxon>
    </lineage>
</organism>
<reference key="1">
    <citation type="submission" date="2006-08" db="EMBL/GenBank/DDBJ databases">
        <title>Complete sequence of Shewanella sp. MR-4.</title>
        <authorList>
            <consortium name="US DOE Joint Genome Institute"/>
            <person name="Copeland A."/>
            <person name="Lucas S."/>
            <person name="Lapidus A."/>
            <person name="Barry K."/>
            <person name="Detter J.C."/>
            <person name="Glavina del Rio T."/>
            <person name="Hammon N."/>
            <person name="Israni S."/>
            <person name="Dalin E."/>
            <person name="Tice H."/>
            <person name="Pitluck S."/>
            <person name="Kiss H."/>
            <person name="Brettin T."/>
            <person name="Bruce D."/>
            <person name="Han C."/>
            <person name="Tapia R."/>
            <person name="Gilna P."/>
            <person name="Schmutz J."/>
            <person name="Larimer F."/>
            <person name="Land M."/>
            <person name="Hauser L."/>
            <person name="Kyrpides N."/>
            <person name="Mikhailova N."/>
            <person name="Nealson K."/>
            <person name="Konstantinidis K."/>
            <person name="Klappenbach J."/>
            <person name="Tiedje J."/>
            <person name="Richardson P."/>
        </authorList>
    </citation>
    <scope>NUCLEOTIDE SEQUENCE [LARGE SCALE GENOMIC DNA]</scope>
    <source>
        <strain>MR-4</strain>
    </source>
</reference>
<dbReference type="EMBL" id="CP000446">
    <property type="protein sequence ID" value="ABI39731.1"/>
    <property type="molecule type" value="Genomic_DNA"/>
</dbReference>
<dbReference type="RefSeq" id="WP_011623411.1">
    <property type="nucleotide sequence ID" value="NC_008321.1"/>
</dbReference>
<dbReference type="SMR" id="Q0HGT6"/>
<dbReference type="KEGG" id="she:Shewmr4_2660"/>
<dbReference type="HOGENOM" id="CLU_121866_0_0_6"/>
<dbReference type="GO" id="GO:0009898">
    <property type="term" value="C:cytoplasmic side of plasma membrane"/>
    <property type="evidence" value="ECO:0007669"/>
    <property type="project" value="InterPro"/>
</dbReference>
<dbReference type="CDD" id="cd16323">
    <property type="entry name" value="Syd"/>
    <property type="match status" value="1"/>
</dbReference>
<dbReference type="Gene3D" id="3.40.1580.20">
    <property type="entry name" value="Syd protein"/>
    <property type="match status" value="1"/>
</dbReference>
<dbReference type="HAMAP" id="MF_01104">
    <property type="entry name" value="Syd"/>
    <property type="match status" value="1"/>
</dbReference>
<dbReference type="InterPro" id="IPR009948">
    <property type="entry name" value="Syd"/>
</dbReference>
<dbReference type="InterPro" id="IPR038228">
    <property type="entry name" value="Syd_sf"/>
</dbReference>
<dbReference type="NCBIfam" id="NF003439">
    <property type="entry name" value="PRK04968.1"/>
    <property type="match status" value="1"/>
</dbReference>
<dbReference type="Pfam" id="PF07348">
    <property type="entry name" value="Syd"/>
    <property type="match status" value="1"/>
</dbReference>
<feature type="chain" id="PRO_0000298262" description="Protein Syd">
    <location>
        <begin position="1"/>
        <end position="216"/>
    </location>
</feature>
<keyword id="KW-0997">Cell inner membrane</keyword>
<keyword id="KW-1003">Cell membrane</keyword>
<keyword id="KW-0472">Membrane</keyword>
<name>SYDP_SHESM</name>
<proteinExistence type="inferred from homology"/>
<gene>
    <name evidence="1" type="primary">syd</name>
    <name type="ordered locus">Shewmr4_2660</name>
</gene>
<protein>
    <recommendedName>
        <fullName evidence="1">Protein Syd</fullName>
    </recommendedName>
</protein>
<sequence>MSCLPALDKFLQNYHQSYLSTLGELPRYYPQGEPSLCIQGEFDESSDEAVSWLPVKREQLGSFANVEHALELTLWRDINHFYGEYFAAPVLFDSPWGTGELLQVWNEADFDALQQNIIGHLMMKQKLKQPATWFIGLLDEGDKMLTVDNANGSVWVEIPGELPSAQLAPSVAEFIESLSPRIAPPVKHEELPMPALEHPGIFASFKRMWHNLIGKR</sequence>